<protein>
    <recommendedName>
        <fullName>Autophagy-related protein 13</fullName>
    </recommendedName>
</protein>
<reference key="1">
    <citation type="journal article" date="2007" name="Autophagy">
        <title>ATG genes involved in non-selective autophagy are conserved from yeast to man, but the selective Cvt and pexophagy pathways also require organism-specific genes.</title>
        <authorList>
            <person name="Meijer W.H."/>
            <person name="van der Klei I.J."/>
            <person name="Veenhuis M."/>
            <person name="Kiel J.A.K.W."/>
        </authorList>
    </citation>
    <scope>NUCLEOTIDE SEQUENCE [GENOMIC DNA]</scope>
    <scope>FUNCTION</scope>
</reference>
<reference key="2">
    <citation type="journal article" date="2008" name="Nat. Biotechnol.">
        <title>Genome sequencing and analysis of the filamentous fungus Penicillium chrysogenum.</title>
        <authorList>
            <person name="van den Berg M.A."/>
            <person name="Albang R."/>
            <person name="Albermann K."/>
            <person name="Badger J.H."/>
            <person name="Daran J.-M."/>
            <person name="Driessen A.J.M."/>
            <person name="Garcia-Estrada C."/>
            <person name="Fedorova N.D."/>
            <person name="Harris D.M."/>
            <person name="Heijne W.H.M."/>
            <person name="Joardar V.S."/>
            <person name="Kiel J.A.K.W."/>
            <person name="Kovalchuk A."/>
            <person name="Martin J.F."/>
            <person name="Nierman W.C."/>
            <person name="Nijland J.G."/>
            <person name="Pronk J.T."/>
            <person name="Roubos J.A."/>
            <person name="van der Klei I.J."/>
            <person name="van Peij N.N.M.E."/>
            <person name="Veenhuis M."/>
            <person name="von Doehren H."/>
            <person name="Wagner C."/>
            <person name="Wortman J.R."/>
            <person name="Bovenberg R.A.L."/>
        </authorList>
    </citation>
    <scope>NUCLEOTIDE SEQUENCE [LARGE SCALE GENOMIC DNA]</scope>
    <source>
        <strain>ATCC 28089 / DSM 1075 / NRRL 1951 / Wisconsin 54-1255</strain>
    </source>
</reference>
<feature type="chain" id="PRO_0000317947" description="Autophagy-related protein 13">
    <location>
        <begin position="1"/>
        <end position="974"/>
    </location>
</feature>
<feature type="region of interest" description="Disordered" evidence="3">
    <location>
        <begin position="1"/>
        <end position="61"/>
    </location>
</feature>
<feature type="region of interest" description="Disordered" evidence="3">
    <location>
        <begin position="379"/>
        <end position="575"/>
    </location>
</feature>
<feature type="region of interest" description="Disordered" evidence="3">
    <location>
        <begin position="661"/>
        <end position="689"/>
    </location>
</feature>
<feature type="region of interest" description="Disordered" evidence="3">
    <location>
        <begin position="703"/>
        <end position="743"/>
    </location>
</feature>
<feature type="region of interest" description="Disordered" evidence="3">
    <location>
        <begin position="787"/>
        <end position="974"/>
    </location>
</feature>
<feature type="compositionally biased region" description="Polar residues" evidence="3">
    <location>
        <begin position="1"/>
        <end position="10"/>
    </location>
</feature>
<feature type="compositionally biased region" description="Pro residues" evidence="3">
    <location>
        <begin position="11"/>
        <end position="20"/>
    </location>
</feature>
<feature type="compositionally biased region" description="Basic and acidic residues" evidence="3">
    <location>
        <begin position="21"/>
        <end position="30"/>
    </location>
</feature>
<feature type="compositionally biased region" description="Polar residues" evidence="3">
    <location>
        <begin position="32"/>
        <end position="45"/>
    </location>
</feature>
<feature type="compositionally biased region" description="Polar residues" evidence="3">
    <location>
        <begin position="379"/>
        <end position="391"/>
    </location>
</feature>
<feature type="compositionally biased region" description="Polar residues" evidence="3">
    <location>
        <begin position="434"/>
        <end position="445"/>
    </location>
</feature>
<feature type="compositionally biased region" description="Low complexity" evidence="3">
    <location>
        <begin position="451"/>
        <end position="464"/>
    </location>
</feature>
<feature type="compositionally biased region" description="Polar residues" evidence="3">
    <location>
        <begin position="469"/>
        <end position="482"/>
    </location>
</feature>
<feature type="compositionally biased region" description="Low complexity" evidence="3">
    <location>
        <begin position="491"/>
        <end position="521"/>
    </location>
</feature>
<feature type="compositionally biased region" description="Polar residues" evidence="3">
    <location>
        <begin position="547"/>
        <end position="559"/>
    </location>
</feature>
<feature type="compositionally biased region" description="Basic and acidic residues" evidence="3">
    <location>
        <begin position="703"/>
        <end position="719"/>
    </location>
</feature>
<feature type="compositionally biased region" description="Polar residues" evidence="3">
    <location>
        <begin position="720"/>
        <end position="730"/>
    </location>
</feature>
<feature type="compositionally biased region" description="Low complexity" evidence="3">
    <location>
        <begin position="790"/>
        <end position="800"/>
    </location>
</feature>
<feature type="compositionally biased region" description="Polar residues" evidence="3">
    <location>
        <begin position="823"/>
        <end position="840"/>
    </location>
</feature>
<feature type="compositionally biased region" description="Low complexity" evidence="3">
    <location>
        <begin position="848"/>
        <end position="873"/>
    </location>
</feature>
<feature type="compositionally biased region" description="Basic and acidic residues" evidence="3">
    <location>
        <begin position="877"/>
        <end position="886"/>
    </location>
</feature>
<feature type="compositionally biased region" description="Low complexity" evidence="3">
    <location>
        <begin position="887"/>
        <end position="896"/>
    </location>
</feature>
<feature type="compositionally biased region" description="Polar residues" evidence="3">
    <location>
        <begin position="906"/>
        <end position="916"/>
    </location>
</feature>
<proteinExistence type="inferred from homology"/>
<sequence>MHQHPRSSVPSPAPNFPPRPTARDDRREQEAAPSSPTVDMGSNSARGLGIEPGPQPSEQGRNAALGREALTRLNQIISNYHTKAALIILHSRVALPPSFNKGSESPRVNRWFNVELDDTDVLREPLRPWRTCDATDNRPPPLVIETYLDTKGLTNNQSLVILDENGKRWDVRESLAALQGARAKPYQSENDEIILERWRIELGESSSRLPADLGSILPTVYKKSIVLFRSLFTYSKFLPAWRFSKRNKKLRQSPALQIKYRVVDGSVARDDLSLDHLTAPLSEGSEKVVDTYSFGVTESPAGPFSVQVTYRTNCDFRVDDSEALLSSRFMGADDEIFRPSLPSDDVNRPNPEIGSVPVERKAVENPDCTRAYGSLSTFHQVGPTTGASPISTLRAMRDSGAGSPSPTDSPKRLLPPAKVVPSGRAGQIAGEGGSSNFQRRPSVSFQPFKAPPLSASPALADSPLGMSPRNMSSRIPTGTSADSRVMPPPSSAASARRPTTIASEQAISSSNSASPKPAPISRYSSSFSHRRGRLSAGANRLEDDNSSGRASATSSNAQPGSGLLTEATGTSAESIQADDENISEFLKMLDSKKDLMNSSTSASIQPGPSTTAAALARFRGMRDSNAALSDSMSQSMHMHRSSISSSKQLSGVPPMVAGTSISTASSPGKPMSPHTPHTPHTPAIRSRLSSNSVADDIETDHHSRLPRIHHDPPLEEHSSAENTRAPSSTAGAIDIPTSPRIFNPAYRRSSSAAVRRPIVTSDDDEIFPFGIRSLSLGADESANATLGATQQQNESQKDQQSPAEDRSGPSVSTTGPYRDSASLRGQMSGPTSASASSNPHVYQPRFASSRGRGYSGGHSLSSASSSLARGANLTPHLAERDQDRDGNASGSNSGNSTLEIRRGSGQRPSTGRTLSGQAPEDDEPLLFAMSDFGASRRSLDEGRHGNHGGTESAAGSRRGSGRRGAGLPGFHVWS</sequence>
<gene>
    <name type="primary">atg13</name>
    <name type="ORF">Pc12g10930</name>
</gene>
<organism>
    <name type="scientific">Penicillium rubens (strain ATCC 28089 / DSM 1075 / NRRL 1951 / Wisconsin 54-1255)</name>
    <name type="common">Penicillium chrysogenum</name>
    <dbReference type="NCBI Taxonomy" id="500485"/>
    <lineage>
        <taxon>Eukaryota</taxon>
        <taxon>Fungi</taxon>
        <taxon>Dikarya</taxon>
        <taxon>Ascomycota</taxon>
        <taxon>Pezizomycotina</taxon>
        <taxon>Eurotiomycetes</taxon>
        <taxon>Eurotiomycetidae</taxon>
        <taxon>Eurotiales</taxon>
        <taxon>Aspergillaceae</taxon>
        <taxon>Penicillium</taxon>
        <taxon>Penicillium chrysogenum species complex</taxon>
    </lineage>
</organism>
<name>ATG13_PENRW</name>
<comment type="function">
    <text evidence="1 4">Activates the atg1 kinase in a nutritional condition dependent manner through the TOR pathway, leading to autophagy. Also involved in cytoplasm to vacuole transport (Cvt) and more specifically in Cvt vesicle formation. Seems to play a role in the switching machinery regulating the conversion between the Cvt pathway and autophagy. Finally, atg13 is also required for glycogen storage during stationary phase (By similarity).</text>
</comment>
<comment type="subunit">
    <text evidence="1">Interacts with atg1 to form the atg1-atg13 kinase complex.</text>
</comment>
<comment type="subcellular location">
    <subcellularLocation>
        <location evidence="2">Cytoplasm</location>
    </subcellularLocation>
    <subcellularLocation>
        <location evidence="2">Preautophagosomal structure</location>
    </subcellularLocation>
</comment>
<comment type="similarity">
    <text evidence="5">Belongs to the ATG13 family. Fungi subfamily.</text>
</comment>
<evidence type="ECO:0000250" key="1"/>
<evidence type="ECO:0000250" key="2">
    <source>
        <dbReference type="UniProtKB" id="Q06628"/>
    </source>
</evidence>
<evidence type="ECO:0000256" key="3">
    <source>
        <dbReference type="SAM" id="MobiDB-lite"/>
    </source>
</evidence>
<evidence type="ECO:0000269" key="4">
    <source>
    </source>
</evidence>
<evidence type="ECO:0000305" key="5"/>
<keyword id="KW-0072">Autophagy</keyword>
<keyword id="KW-0963">Cytoplasm</keyword>
<keyword id="KW-0653">Protein transport</keyword>
<keyword id="KW-1185">Reference proteome</keyword>
<keyword id="KW-0813">Transport</keyword>
<dbReference type="EMBL" id="EF107746">
    <property type="protein sequence ID" value="ABO31084.1"/>
    <property type="molecule type" value="Genomic_DNA"/>
</dbReference>
<dbReference type="EMBL" id="AM920427">
    <property type="protein sequence ID" value="CAP80720.1"/>
    <property type="molecule type" value="Genomic_DNA"/>
</dbReference>
<dbReference type="RefSeq" id="XP_002557913.1">
    <property type="nucleotide sequence ID" value="XM_002557867.1"/>
</dbReference>
<dbReference type="SMR" id="A7KAM4"/>
<dbReference type="STRING" id="500485.A7KAM4"/>
<dbReference type="GeneID" id="8313155"/>
<dbReference type="KEGG" id="pcs:N7525_001485"/>
<dbReference type="VEuPathDB" id="FungiDB:PCH_Pc12g10930"/>
<dbReference type="eggNOG" id="KOG4573">
    <property type="taxonomic scope" value="Eukaryota"/>
</dbReference>
<dbReference type="HOGENOM" id="CLU_007151_1_0_1"/>
<dbReference type="OMA" id="FHQVGPT"/>
<dbReference type="OrthoDB" id="70161at2759"/>
<dbReference type="BioCyc" id="PCHR:PC12G10930-MONOMER"/>
<dbReference type="Proteomes" id="UP000000724">
    <property type="component" value="Contig Pc00c12"/>
</dbReference>
<dbReference type="GO" id="GO:1990316">
    <property type="term" value="C:Atg1/ULK1 kinase complex"/>
    <property type="evidence" value="ECO:0007669"/>
    <property type="project" value="InterPro"/>
</dbReference>
<dbReference type="GO" id="GO:0005829">
    <property type="term" value="C:cytosol"/>
    <property type="evidence" value="ECO:0007669"/>
    <property type="project" value="TreeGrafter"/>
</dbReference>
<dbReference type="GO" id="GO:0000407">
    <property type="term" value="C:phagophore assembly site"/>
    <property type="evidence" value="ECO:0007669"/>
    <property type="project" value="UniProtKB-SubCell"/>
</dbReference>
<dbReference type="GO" id="GO:0000423">
    <property type="term" value="P:mitophagy"/>
    <property type="evidence" value="ECO:0007669"/>
    <property type="project" value="TreeGrafter"/>
</dbReference>
<dbReference type="GO" id="GO:0034727">
    <property type="term" value="P:piecemeal microautophagy of the nucleus"/>
    <property type="evidence" value="ECO:0007669"/>
    <property type="project" value="TreeGrafter"/>
</dbReference>
<dbReference type="GO" id="GO:0034497">
    <property type="term" value="P:protein localization to phagophore assembly site"/>
    <property type="evidence" value="ECO:0007669"/>
    <property type="project" value="TreeGrafter"/>
</dbReference>
<dbReference type="GO" id="GO:0015031">
    <property type="term" value="P:protein transport"/>
    <property type="evidence" value="ECO:0007669"/>
    <property type="project" value="UniProtKB-KW"/>
</dbReference>
<dbReference type="FunFam" id="3.30.900.10:FF:000010">
    <property type="entry name" value="Autophagy-related protein 13"/>
    <property type="match status" value="1"/>
</dbReference>
<dbReference type="Gene3D" id="6.10.140.1900">
    <property type="match status" value="1"/>
</dbReference>
<dbReference type="Gene3D" id="3.30.900.10">
    <property type="entry name" value="HORMA domain"/>
    <property type="match status" value="1"/>
</dbReference>
<dbReference type="InterPro" id="IPR040182">
    <property type="entry name" value="ATG13"/>
</dbReference>
<dbReference type="InterPro" id="IPR018731">
    <property type="entry name" value="Atg13_N"/>
</dbReference>
<dbReference type="InterPro" id="IPR036570">
    <property type="entry name" value="HORMA_dom_sf"/>
</dbReference>
<dbReference type="PANTHER" id="PTHR13430">
    <property type="match status" value="1"/>
</dbReference>
<dbReference type="PANTHER" id="PTHR13430:SF4">
    <property type="entry name" value="AUTOPHAGY-RELATED PROTEIN 13"/>
    <property type="match status" value="1"/>
</dbReference>
<dbReference type="Pfam" id="PF10033">
    <property type="entry name" value="ATG13"/>
    <property type="match status" value="1"/>
</dbReference>
<accession>A7KAM4</accession>
<accession>B6GWT6</accession>